<protein>
    <recommendedName>
        <fullName>UPF0235 protein in proC 3'region</fullName>
    </recommendedName>
</protein>
<reference key="1">
    <citation type="submission" date="1995-05" db="EMBL/GenBank/DDBJ databases">
        <authorList>
            <person name="Nakamura T."/>
            <person name="Kato Y."/>
            <person name="Shimizu Y."/>
            <person name="Matsuba Y."/>
            <person name="Unemoto T."/>
        </authorList>
    </citation>
    <scope>NUCLEOTIDE SEQUENCE [GENOMIC DNA]</scope>
    <source>
        <strain>138-2</strain>
    </source>
</reference>
<reference key="2">
    <citation type="unpublished observations" date="1996-03">
        <authorList>
            <person name="Rudd K.E."/>
        </authorList>
    </citation>
    <scope>IDENTIFICATION</scope>
</reference>
<accession>P52064</accession>
<comment type="similarity">
    <text evidence="1">Belongs to the UPF0235 family.</text>
</comment>
<dbReference type="EMBL" id="D50472">
    <property type="status" value="NOT_ANNOTATED_CDS"/>
    <property type="molecule type" value="Genomic_DNA"/>
</dbReference>
<dbReference type="SMR" id="P52064"/>
<dbReference type="STRING" id="663.BAU10_12670"/>
<dbReference type="eggNOG" id="COG1872">
    <property type="taxonomic scope" value="Bacteria"/>
</dbReference>
<dbReference type="Gene3D" id="3.30.1200.10">
    <property type="entry name" value="YggU-like"/>
    <property type="match status" value="1"/>
</dbReference>
<dbReference type="InterPro" id="IPR003746">
    <property type="entry name" value="DUF167"/>
</dbReference>
<dbReference type="InterPro" id="IPR036591">
    <property type="entry name" value="YggU-like_sf"/>
</dbReference>
<dbReference type="NCBIfam" id="TIGR00251">
    <property type="entry name" value="DUF167 family protein"/>
    <property type="match status" value="1"/>
</dbReference>
<dbReference type="Pfam" id="PF02594">
    <property type="entry name" value="DUF167"/>
    <property type="match status" value="1"/>
</dbReference>
<dbReference type="SMART" id="SM01152">
    <property type="entry name" value="DUF167"/>
    <property type="match status" value="1"/>
</dbReference>
<dbReference type="SUPFAM" id="SSF69786">
    <property type="entry name" value="YggU-like"/>
    <property type="match status" value="1"/>
</dbReference>
<organism>
    <name type="scientific">Vibrio alginolyticus</name>
    <dbReference type="NCBI Taxonomy" id="663"/>
    <lineage>
        <taxon>Bacteria</taxon>
        <taxon>Pseudomonadati</taxon>
        <taxon>Pseudomonadota</taxon>
        <taxon>Gammaproteobacteria</taxon>
        <taxon>Vibrionales</taxon>
        <taxon>Vibrionaceae</taxon>
        <taxon>Vibrio</taxon>
    </lineage>
</organism>
<feature type="chain" id="PRO_0000139459" description="UPF0235 protein in proC 3'region">
    <location>
        <begin position="1"/>
        <end position="54" status="greater than"/>
    </location>
</feature>
<feature type="non-terminal residue">
    <location>
        <position position="54"/>
    </location>
</feature>
<sequence>MSAAVWQDGEDIILKLYIQPKASRDKIVGLHGEELKIAITAPPVDGKANAHLTK</sequence>
<proteinExistence type="inferred from homology"/>
<evidence type="ECO:0000305" key="1"/>
<name>YPI4_VIBAL</name>